<dbReference type="EMBL" id="AP008934">
    <property type="protein sequence ID" value="BAE17909.1"/>
    <property type="molecule type" value="Genomic_DNA"/>
</dbReference>
<dbReference type="RefSeq" id="WP_002482711.1">
    <property type="nucleotide sequence ID" value="NZ_MTGA01000032.1"/>
</dbReference>
<dbReference type="SMR" id="Q49Z67"/>
<dbReference type="KEGG" id="ssp:SSP0764"/>
<dbReference type="eggNOG" id="COG0254">
    <property type="taxonomic scope" value="Bacteria"/>
</dbReference>
<dbReference type="HOGENOM" id="CLU_114306_2_2_9"/>
<dbReference type="OrthoDB" id="9803251at2"/>
<dbReference type="Proteomes" id="UP000006371">
    <property type="component" value="Chromosome"/>
</dbReference>
<dbReference type="GO" id="GO:1990904">
    <property type="term" value="C:ribonucleoprotein complex"/>
    <property type="evidence" value="ECO:0007669"/>
    <property type="project" value="UniProtKB-KW"/>
</dbReference>
<dbReference type="GO" id="GO:0005840">
    <property type="term" value="C:ribosome"/>
    <property type="evidence" value="ECO:0007669"/>
    <property type="project" value="UniProtKB-KW"/>
</dbReference>
<dbReference type="GO" id="GO:0003735">
    <property type="term" value="F:structural constituent of ribosome"/>
    <property type="evidence" value="ECO:0007669"/>
    <property type="project" value="InterPro"/>
</dbReference>
<dbReference type="GO" id="GO:0006412">
    <property type="term" value="P:translation"/>
    <property type="evidence" value="ECO:0007669"/>
    <property type="project" value="UniProtKB-UniRule"/>
</dbReference>
<dbReference type="Gene3D" id="4.10.830.30">
    <property type="entry name" value="Ribosomal protein L31"/>
    <property type="match status" value="1"/>
</dbReference>
<dbReference type="HAMAP" id="MF_00502">
    <property type="entry name" value="Ribosomal_bL31_2"/>
    <property type="match status" value="1"/>
</dbReference>
<dbReference type="InterPro" id="IPR034704">
    <property type="entry name" value="Ribosomal_bL28/bL31-like_sf"/>
</dbReference>
<dbReference type="InterPro" id="IPR002150">
    <property type="entry name" value="Ribosomal_bL31"/>
</dbReference>
<dbReference type="InterPro" id="IPR027493">
    <property type="entry name" value="Ribosomal_bL31_B"/>
</dbReference>
<dbReference type="InterPro" id="IPR042105">
    <property type="entry name" value="Ribosomal_bL31_sf"/>
</dbReference>
<dbReference type="NCBIfam" id="TIGR00105">
    <property type="entry name" value="L31"/>
    <property type="match status" value="1"/>
</dbReference>
<dbReference type="NCBIfam" id="NF002462">
    <property type="entry name" value="PRK01678.1"/>
    <property type="match status" value="1"/>
</dbReference>
<dbReference type="PANTHER" id="PTHR33280">
    <property type="entry name" value="50S RIBOSOMAL PROTEIN L31, CHLOROPLASTIC"/>
    <property type="match status" value="1"/>
</dbReference>
<dbReference type="PANTHER" id="PTHR33280:SF1">
    <property type="entry name" value="LARGE RIBOSOMAL SUBUNIT PROTEIN BL31C"/>
    <property type="match status" value="1"/>
</dbReference>
<dbReference type="Pfam" id="PF01197">
    <property type="entry name" value="Ribosomal_L31"/>
    <property type="match status" value="1"/>
</dbReference>
<dbReference type="PRINTS" id="PR01249">
    <property type="entry name" value="RIBOSOMALL31"/>
</dbReference>
<dbReference type="SUPFAM" id="SSF143800">
    <property type="entry name" value="L28p-like"/>
    <property type="match status" value="1"/>
</dbReference>
<dbReference type="PROSITE" id="PS01143">
    <property type="entry name" value="RIBOSOMAL_L31"/>
    <property type="match status" value="1"/>
</dbReference>
<feature type="chain" id="PRO_0000259124" description="Large ribosomal subunit protein bL31B">
    <location>
        <begin position="1"/>
        <end position="85"/>
    </location>
</feature>
<evidence type="ECO:0000255" key="1">
    <source>
        <dbReference type="HAMAP-Rule" id="MF_00502"/>
    </source>
</evidence>
<evidence type="ECO:0000305" key="2"/>
<comment type="subunit">
    <text evidence="1">Part of the 50S ribosomal subunit.</text>
</comment>
<comment type="similarity">
    <text evidence="1">Belongs to the bacterial ribosomal protein bL31 family. Type B subfamily.</text>
</comment>
<proteinExistence type="inferred from homology"/>
<keyword id="KW-1185">Reference proteome</keyword>
<keyword id="KW-0687">Ribonucleoprotein</keyword>
<keyword id="KW-0689">Ribosomal protein</keyword>
<protein>
    <recommendedName>
        <fullName evidence="1">Large ribosomal subunit protein bL31B</fullName>
    </recommendedName>
    <alternativeName>
        <fullName evidence="2">50S ribosomal protein L31 type B</fullName>
    </alternativeName>
</protein>
<gene>
    <name evidence="1" type="primary">rpmE2</name>
    <name type="ordered locus">SSP0764</name>
</gene>
<sequence>MRQNIHPEYHNVIFLDTTTDFKFLSGSTKTSSETMEWEDGNEYPVIRLDISSDSHPFYTGRQKFAAADGRVERFNKKFGFKSSNE</sequence>
<accession>Q49Z67</accession>
<organism>
    <name type="scientific">Staphylococcus saprophyticus subsp. saprophyticus (strain ATCC 15305 / DSM 20229 / NCIMB 8711 / NCTC 7292 / S-41)</name>
    <dbReference type="NCBI Taxonomy" id="342451"/>
    <lineage>
        <taxon>Bacteria</taxon>
        <taxon>Bacillati</taxon>
        <taxon>Bacillota</taxon>
        <taxon>Bacilli</taxon>
        <taxon>Bacillales</taxon>
        <taxon>Staphylococcaceae</taxon>
        <taxon>Staphylococcus</taxon>
    </lineage>
</organism>
<reference key="1">
    <citation type="journal article" date="2005" name="Proc. Natl. Acad. Sci. U.S.A.">
        <title>Whole genome sequence of Staphylococcus saprophyticus reveals the pathogenesis of uncomplicated urinary tract infection.</title>
        <authorList>
            <person name="Kuroda M."/>
            <person name="Yamashita A."/>
            <person name="Hirakawa H."/>
            <person name="Kumano M."/>
            <person name="Morikawa K."/>
            <person name="Higashide M."/>
            <person name="Maruyama A."/>
            <person name="Inose Y."/>
            <person name="Matoba K."/>
            <person name="Toh H."/>
            <person name="Kuhara S."/>
            <person name="Hattori M."/>
            <person name="Ohta T."/>
        </authorList>
    </citation>
    <scope>NUCLEOTIDE SEQUENCE [LARGE SCALE GENOMIC DNA]</scope>
    <source>
        <strain>ATCC 15305 / DSM 20229 / NCIMB 8711 / NCTC 7292 / S-41</strain>
    </source>
</reference>
<name>RL31B_STAS1</name>